<protein>
    <recommendedName>
        <fullName evidence="1">Ribosomal RNA large subunit methyltransferase I</fullName>
        <ecNumber evidence="1">2.1.1.191</ecNumber>
    </recommendedName>
    <alternativeName>
        <fullName evidence="1">23S rRNA m5C1962 methyltransferase</fullName>
    </alternativeName>
    <alternativeName>
        <fullName evidence="1">rRNA (cytosine-C(5)-)-methyltransferase RlmI</fullName>
    </alternativeName>
</protein>
<accession>C4ZQ93</accession>
<name>RLMI_ECOBW</name>
<organism>
    <name type="scientific">Escherichia coli (strain K12 / MC4100 / BW2952)</name>
    <dbReference type="NCBI Taxonomy" id="595496"/>
    <lineage>
        <taxon>Bacteria</taxon>
        <taxon>Pseudomonadati</taxon>
        <taxon>Pseudomonadota</taxon>
        <taxon>Gammaproteobacteria</taxon>
        <taxon>Enterobacterales</taxon>
        <taxon>Enterobacteriaceae</taxon>
        <taxon>Escherichia</taxon>
    </lineage>
</organism>
<keyword id="KW-0963">Cytoplasm</keyword>
<keyword id="KW-0489">Methyltransferase</keyword>
<keyword id="KW-0694">RNA-binding</keyword>
<keyword id="KW-0698">rRNA processing</keyword>
<keyword id="KW-0949">S-adenosyl-L-methionine</keyword>
<keyword id="KW-0808">Transferase</keyword>
<sequence>MSVRLVLAKGREKSLLRRHPWVFSGAVARMEGKASLGETIDIVDHQGKWLARGAYSPASQIRARVWTFDPSESIDIAFFSRRLQQAQKWRDWLAQKDGLDSYRLIAGESDGLPGITIDRFGNFLVLQLLSAGAEYQRAALISALQTLYPECSIYDRSDVAVRKKEGMELTQGPVTGELPPALLPIEEHGMKLLVDIQHGHKTGYYLDQRDSRLATRRYVENKRVLNCFSYTGGFAVSALMGGCSQVVSVDTSQEALDIARQNVELNKLDLSKAEFVRDDVFKLLRTYRDRGEKFDVIVMDPPKFVENKSQLMGACRGYKDINMLAIQLLNEGGILLTFSCSGLMTSDLFQKIIADAAIDAGRDVQFIEQFRQAADHPVIATYPEGLYLKGFACRVM</sequence>
<feature type="chain" id="PRO_1000216154" description="Ribosomal RNA large subunit methyltransferase I">
    <location>
        <begin position="1"/>
        <end position="396"/>
    </location>
</feature>
<feature type="domain" description="PUA" evidence="1">
    <location>
        <begin position="2"/>
        <end position="81"/>
    </location>
</feature>
<comment type="function">
    <text evidence="1">Specifically methylates the cytosine at position 1962 (m5C1962) of 23S rRNA.</text>
</comment>
<comment type="catalytic activity">
    <reaction evidence="1">
        <text>cytidine(1962) in 23S rRNA + S-adenosyl-L-methionine = 5-methylcytidine(1962) in 23S rRNA + S-adenosyl-L-homocysteine + H(+)</text>
        <dbReference type="Rhea" id="RHEA:42912"/>
        <dbReference type="Rhea" id="RHEA-COMP:10382"/>
        <dbReference type="Rhea" id="RHEA-COMP:10386"/>
        <dbReference type="ChEBI" id="CHEBI:15378"/>
        <dbReference type="ChEBI" id="CHEBI:57856"/>
        <dbReference type="ChEBI" id="CHEBI:59789"/>
        <dbReference type="ChEBI" id="CHEBI:74483"/>
        <dbReference type="ChEBI" id="CHEBI:82748"/>
        <dbReference type="EC" id="2.1.1.191"/>
    </reaction>
</comment>
<comment type="subcellular location">
    <subcellularLocation>
        <location evidence="1">Cytoplasm</location>
    </subcellularLocation>
</comment>
<comment type="similarity">
    <text evidence="1">Belongs to the methyltransferase superfamily. RlmI family.</text>
</comment>
<reference key="1">
    <citation type="journal article" date="2009" name="J. Bacteriol.">
        <title>Genomic sequencing reveals regulatory mutations and recombinational events in the widely used MC4100 lineage of Escherichia coli K-12.</title>
        <authorList>
            <person name="Ferenci T."/>
            <person name="Zhou Z."/>
            <person name="Betteridge T."/>
            <person name="Ren Y."/>
            <person name="Liu Y."/>
            <person name="Feng L."/>
            <person name="Reeves P.R."/>
            <person name="Wang L."/>
        </authorList>
    </citation>
    <scope>NUCLEOTIDE SEQUENCE [LARGE SCALE GENOMIC DNA]</scope>
    <source>
        <strain>K12 / MC4100 / BW2952</strain>
    </source>
</reference>
<proteinExistence type="inferred from homology"/>
<gene>
    <name evidence="1" type="primary">rlmI</name>
    <name type="ordered locus">BWG_0819</name>
</gene>
<dbReference type="EC" id="2.1.1.191" evidence="1"/>
<dbReference type="EMBL" id="CP001396">
    <property type="protein sequence ID" value="ACR64660.1"/>
    <property type="molecule type" value="Genomic_DNA"/>
</dbReference>
<dbReference type="RefSeq" id="WP_000116297.1">
    <property type="nucleotide sequence ID" value="NC_012759.1"/>
</dbReference>
<dbReference type="SMR" id="C4ZQ93"/>
<dbReference type="KEGG" id="ebw:BWG_0819"/>
<dbReference type="HOGENOM" id="CLU_014042_0_0_6"/>
<dbReference type="GO" id="GO:0005737">
    <property type="term" value="C:cytoplasm"/>
    <property type="evidence" value="ECO:0007669"/>
    <property type="project" value="UniProtKB-SubCell"/>
</dbReference>
<dbReference type="GO" id="GO:0003723">
    <property type="term" value="F:RNA binding"/>
    <property type="evidence" value="ECO:0007669"/>
    <property type="project" value="UniProtKB-KW"/>
</dbReference>
<dbReference type="GO" id="GO:0016434">
    <property type="term" value="F:rRNA (cytosine) methyltransferase activity"/>
    <property type="evidence" value="ECO:0007669"/>
    <property type="project" value="UniProtKB-UniRule"/>
</dbReference>
<dbReference type="CDD" id="cd02440">
    <property type="entry name" value="AdoMet_MTases"/>
    <property type="match status" value="1"/>
</dbReference>
<dbReference type="CDD" id="cd21153">
    <property type="entry name" value="PUA_RlmI"/>
    <property type="match status" value="1"/>
</dbReference>
<dbReference type="CDD" id="cd11572">
    <property type="entry name" value="RlmI_M_like"/>
    <property type="match status" value="1"/>
</dbReference>
<dbReference type="FunFam" id="2.30.130.10:FF:000005">
    <property type="entry name" value="Ribosomal RNA large subunit methyltransferase I"/>
    <property type="match status" value="1"/>
</dbReference>
<dbReference type="FunFam" id="3.30.750.80:FF:000002">
    <property type="entry name" value="Ribosomal RNA large subunit methyltransferase I"/>
    <property type="match status" value="1"/>
</dbReference>
<dbReference type="FunFam" id="3.40.50.150:FF:000044">
    <property type="entry name" value="Ribosomal RNA large subunit methyltransferase I"/>
    <property type="match status" value="1"/>
</dbReference>
<dbReference type="Gene3D" id="2.30.130.10">
    <property type="entry name" value="PUA domain"/>
    <property type="match status" value="1"/>
</dbReference>
<dbReference type="Gene3D" id="3.30.750.80">
    <property type="entry name" value="RNA methyltransferase domain (HRMD) like"/>
    <property type="match status" value="1"/>
</dbReference>
<dbReference type="Gene3D" id="3.40.50.150">
    <property type="entry name" value="Vaccinia Virus protein VP39"/>
    <property type="match status" value="1"/>
</dbReference>
<dbReference type="HAMAP" id="MF_01857">
    <property type="entry name" value="23SrRNA_methyltr_I"/>
    <property type="match status" value="1"/>
</dbReference>
<dbReference type="InterPro" id="IPR002478">
    <property type="entry name" value="PUA"/>
</dbReference>
<dbReference type="InterPro" id="IPR015947">
    <property type="entry name" value="PUA-like_sf"/>
</dbReference>
<dbReference type="InterPro" id="IPR036974">
    <property type="entry name" value="PUA_sf"/>
</dbReference>
<dbReference type="InterPro" id="IPR023542">
    <property type="entry name" value="RLMI"/>
</dbReference>
<dbReference type="InterPro" id="IPR041532">
    <property type="entry name" value="RlmI-like_PUA"/>
</dbReference>
<dbReference type="InterPro" id="IPR019614">
    <property type="entry name" value="SAM-dep_methyl-trfase"/>
</dbReference>
<dbReference type="InterPro" id="IPR029063">
    <property type="entry name" value="SAM-dependent_MTases_sf"/>
</dbReference>
<dbReference type="NCBIfam" id="NF011707">
    <property type="entry name" value="PRK15128.1"/>
    <property type="match status" value="1"/>
</dbReference>
<dbReference type="PANTHER" id="PTHR42873">
    <property type="entry name" value="RIBOSOMAL RNA LARGE SUBUNIT METHYLTRANSFERASE"/>
    <property type="match status" value="1"/>
</dbReference>
<dbReference type="PANTHER" id="PTHR42873:SF1">
    <property type="entry name" value="S-ADENOSYLMETHIONINE-DEPENDENT METHYLTRANSFERASE DOMAIN-CONTAINING PROTEIN"/>
    <property type="match status" value="1"/>
</dbReference>
<dbReference type="Pfam" id="PF10672">
    <property type="entry name" value="Methyltrans_SAM"/>
    <property type="match status" value="1"/>
</dbReference>
<dbReference type="Pfam" id="PF17785">
    <property type="entry name" value="PUA_3"/>
    <property type="match status" value="1"/>
</dbReference>
<dbReference type="SMART" id="SM00359">
    <property type="entry name" value="PUA"/>
    <property type="match status" value="1"/>
</dbReference>
<dbReference type="SUPFAM" id="SSF88697">
    <property type="entry name" value="PUA domain-like"/>
    <property type="match status" value="1"/>
</dbReference>
<dbReference type="SUPFAM" id="SSF53335">
    <property type="entry name" value="S-adenosyl-L-methionine-dependent methyltransferases"/>
    <property type="match status" value="1"/>
</dbReference>
<dbReference type="PROSITE" id="PS50890">
    <property type="entry name" value="PUA"/>
    <property type="match status" value="1"/>
</dbReference>
<evidence type="ECO:0000255" key="1">
    <source>
        <dbReference type="HAMAP-Rule" id="MF_01857"/>
    </source>
</evidence>